<feature type="chain" id="PRO_0000423961" description="F(420)H(2) dehydrogenase subunit O">
    <location>
        <begin position="1"/>
        <end position="131"/>
    </location>
</feature>
<feature type="binding site" evidence="1">
    <location>
        <position position="58"/>
    </location>
    <ligand>
        <name>[2Fe-2S] cluster</name>
        <dbReference type="ChEBI" id="CHEBI:190135"/>
    </ligand>
</feature>
<feature type="binding site" evidence="1">
    <location>
        <position position="63"/>
    </location>
    <ligand>
        <name>[2Fe-2S] cluster</name>
        <dbReference type="ChEBI" id="CHEBI:190135"/>
    </ligand>
</feature>
<feature type="binding site" evidence="1">
    <location>
        <position position="66"/>
    </location>
    <ligand>
        <name>[2Fe-2S] cluster</name>
        <dbReference type="ChEBI" id="CHEBI:190135"/>
    </ligand>
</feature>
<name>FPOO_METMA</name>
<keyword id="KW-0001">2Fe-2S</keyword>
<keyword id="KW-0249">Electron transport</keyword>
<keyword id="KW-0408">Iron</keyword>
<keyword id="KW-0411">Iron-sulfur</keyword>
<keyword id="KW-0479">Metal-binding</keyword>
<keyword id="KW-0484">Methanogenesis</keyword>
<keyword id="KW-0485">Methanol utilization</keyword>
<keyword id="KW-0560">Oxidoreductase</keyword>
<keyword id="KW-0813">Transport</keyword>
<protein>
    <recommendedName>
        <fullName>F(420)H(2) dehydrogenase subunit O</fullName>
        <ecNumber evidence="3">1.5.98.3</ecNumber>
    </recommendedName>
    <alternativeName>
        <fullName>F(420)H(2)-dependent phenazine dehydrogenase subunit O</fullName>
    </alternativeName>
    <alternativeName>
        <fullName>F(420)H(2)-dependent phenazine oxidoreductase subunit O</fullName>
        <shortName>FPO subunit O</shortName>
    </alternativeName>
    <alternativeName>
        <fullName>Methanophenazine hydrogenase subunit O</fullName>
    </alternativeName>
    <alternativeName>
        <fullName>Methanosarcina-phenazine hydrogenase subunit O</fullName>
    </alternativeName>
</protein>
<reference key="1">
    <citation type="journal article" date="1997" name="FEMS Microbiol. Lett.">
        <title>Purification and properties of an F420H2 dehydrogenase from Methanosarcina mazei Go1.</title>
        <authorList>
            <person name="Abken H.-J."/>
            <person name="Deppenmeier U."/>
        </authorList>
    </citation>
    <scope>NUCLEOTIDE SEQUENCE [GENOMIC DNA]</scope>
    <scope>FUNCTION</scope>
    <scope>CATALYTIC ACTIVITY</scope>
    <scope>BIOPHYSICOCHEMICAL PROPERTIES</scope>
    <scope>SUBSTRATE SPECIFICITY</scope>
    <source>
        <strain>ATCC BAA-159 / DSM 3647 / Goe1 / Go1 / JCM 11833 / OCM 88</strain>
    </source>
</reference>
<reference key="2">
    <citation type="journal article" date="2000" name="J. Biol. Chem.">
        <title>The F420H2 dehydrogenase from Methanosarcina mazei is a Redox-driven proton pump closely related to NADH dehydrogenases.</title>
        <authorList>
            <person name="Baumer S."/>
            <person name="Ide T."/>
            <person name="Jacobi C."/>
            <person name="Johann A."/>
            <person name="Gottschalk G."/>
            <person name="Deppenmeier U."/>
        </authorList>
    </citation>
    <scope>NUCLEOTIDE SEQUENCE [GENOMIC DNA]</scope>
    <scope>FUNCTION IN THE PROTON TRANSLOCATION</scope>
    <scope>SUBUNIT</scope>
    <scope>COFACTOR</scope>
    <scope>NOMENCLATURE</scope>
    <source>
        <strain>ATCC BAA-159 / DSM 3647 / Goe1 / Go1 / JCM 11833 / OCM 88</strain>
    </source>
</reference>
<reference key="3">
    <citation type="journal article" date="2002" name="J. Mol. Microbiol. Biotechnol.">
        <title>The genome of Methanosarcina mazei: evidence for lateral gene transfer between Bacteria and Archaea.</title>
        <authorList>
            <person name="Deppenmeier U."/>
            <person name="Johann A."/>
            <person name="Hartsch T."/>
            <person name="Merkl R."/>
            <person name="Schmitz R.A."/>
            <person name="Martinez-Arias R."/>
            <person name="Henne A."/>
            <person name="Wiezer A."/>
            <person name="Baeumer S."/>
            <person name="Jacobi C."/>
            <person name="Brueggemann H."/>
            <person name="Lienard T."/>
            <person name="Christmann A."/>
            <person name="Boemecke M."/>
            <person name="Steckel S."/>
            <person name="Bhattacharyya A."/>
            <person name="Lykidis A."/>
            <person name="Overbeek R."/>
            <person name="Klenk H.-P."/>
            <person name="Gunsalus R.P."/>
            <person name="Fritz H.-J."/>
            <person name="Gottschalk G."/>
        </authorList>
    </citation>
    <scope>NUCLEOTIDE SEQUENCE [LARGE SCALE GENOMIC DNA]</scope>
    <source>
        <strain>ATCC BAA-159 / DSM 3647 / Goe1 / Go1 / JCM 11833 / OCM 88</strain>
    </source>
</reference>
<organism>
    <name type="scientific">Methanosarcina mazei (strain ATCC BAA-159 / DSM 3647 / Goe1 / Go1 / JCM 11833 / OCM 88)</name>
    <name type="common">Methanosarcina frisia</name>
    <dbReference type="NCBI Taxonomy" id="192952"/>
    <lineage>
        <taxon>Archaea</taxon>
        <taxon>Methanobacteriati</taxon>
        <taxon>Methanobacteriota</taxon>
        <taxon>Stenosarchaea group</taxon>
        <taxon>Methanomicrobia</taxon>
        <taxon>Methanosarcinales</taxon>
        <taxon>Methanosarcinaceae</taxon>
        <taxon>Methanosarcina</taxon>
    </lineage>
</organism>
<accession>F1SVE1</accession>
<accession>Q7LWK2</accession>
<accession>Q9P9F2</accession>
<gene>
    <name type="primary">fpoO</name>
    <name type="ordered locus">MM_2479</name>
</gene>
<dbReference type="EC" id="1.5.98.3" evidence="3"/>
<dbReference type="EMBL" id="AF228525">
    <property type="protein sequence ID" value="AAF65742.1"/>
    <property type="molecule type" value="Genomic_DNA"/>
</dbReference>
<dbReference type="EMBL" id="AE008384">
    <property type="protein sequence ID" value="AAM32175.1"/>
    <property type="molecule type" value="Genomic_DNA"/>
</dbReference>
<dbReference type="RefSeq" id="WP_011034397.1">
    <property type="nucleotide sequence ID" value="NC_003901.1"/>
</dbReference>
<dbReference type="TCDB" id="3.D.9.1.1">
    <property type="family name" value="the h(+)-translocating f420h2 dehydrogenase (f420h2dh) family"/>
</dbReference>
<dbReference type="KEGG" id="mma:MM_2479"/>
<dbReference type="PATRIC" id="fig|192952.21.peg.2837"/>
<dbReference type="eggNOG" id="arCOG04959">
    <property type="taxonomic scope" value="Archaea"/>
</dbReference>
<dbReference type="HOGENOM" id="CLU_165880_0_0_2"/>
<dbReference type="BRENDA" id="1.12.98.3">
    <property type="organism ID" value="3270"/>
</dbReference>
<dbReference type="Proteomes" id="UP000000595">
    <property type="component" value="Chromosome"/>
</dbReference>
<dbReference type="GO" id="GO:0051537">
    <property type="term" value="F:2 iron, 2 sulfur cluster binding"/>
    <property type="evidence" value="ECO:0007669"/>
    <property type="project" value="UniProtKB-KW"/>
</dbReference>
<dbReference type="GO" id="GO:0046872">
    <property type="term" value="F:metal ion binding"/>
    <property type="evidence" value="ECO:0007669"/>
    <property type="project" value="UniProtKB-KW"/>
</dbReference>
<dbReference type="GO" id="GO:0051911">
    <property type="term" value="F:Methanosarcina-phenazine hydrogenase activity"/>
    <property type="evidence" value="ECO:0007669"/>
    <property type="project" value="UniProtKB-EC"/>
</dbReference>
<dbReference type="GO" id="GO:0043738">
    <property type="term" value="F:reduced coenzyme F420 dehydrogenase activity"/>
    <property type="evidence" value="ECO:0007669"/>
    <property type="project" value="RHEA"/>
</dbReference>
<dbReference type="GO" id="GO:0015948">
    <property type="term" value="P:methanogenesis"/>
    <property type="evidence" value="ECO:0007669"/>
    <property type="project" value="UniProtKB-KW"/>
</dbReference>
<dbReference type="GO" id="GO:0015945">
    <property type="term" value="P:methanol metabolic process"/>
    <property type="evidence" value="ECO:0007669"/>
    <property type="project" value="UniProtKB-KW"/>
</dbReference>
<dbReference type="InterPro" id="IPR018288">
    <property type="entry name" value="F420H2-DH_FpoO"/>
</dbReference>
<dbReference type="Pfam" id="PF10621">
    <property type="entry name" value="FpoO"/>
    <property type="match status" value="1"/>
</dbReference>
<dbReference type="PROSITE" id="PS00197">
    <property type="entry name" value="2FE2S_FER_1"/>
    <property type="match status" value="1"/>
</dbReference>
<sequence length="131" mass="15019">MTDCDLCGKGIPTVIPVRTYPPLLRFAYPEGVWKGLCETCLDSAQKTYLEVNRNHTSCRRGKCSLCGSKTGVFSVELQIPDFSKGIVRKDVDVCYRCLKLVDEAYIRYKREQIEQDHEQGRIHGHEHVHPH</sequence>
<evidence type="ECO:0000255" key="1"/>
<evidence type="ECO:0000269" key="2">
    <source>
    </source>
</evidence>
<evidence type="ECO:0000269" key="3">
    <source ref="1"/>
</evidence>
<evidence type="ECO:0000305" key="4"/>
<proteinExistence type="evidence at protein level"/>
<comment type="function">
    <text evidence="2 3">Component of the F(420)H(2) dehydrogenase (FPO complex) which is part of the energy-conserving F(420)H(2):heterodisulfide oxidoreductase system. The membrane-bound electron transfer system of the complex plays an important role in the metabolism of methylotrophic methanogens when the organisms grow on methanol or methylamines. Catalyzes the oxidation of methanophenazine to dihydromethanophenazine. It shuttles electrons from F(420)H(2), via FAD and iron-sulfur (Fe-S) centers, to methanophenazine (an electron carrier in the membrane). It couples the redox reaction to proton translocation (for every two electrons transferred, two hydrogen ions are translocated across the cytoplasmic membrane), and thus conserves the redox energy in a proton gradient. It also catalyzes the oxidation of F(420)H(2) with quinones such as 2,3-dimethyl-1,4-naphthoquinone, 2-methyl-1,4-naphthoquinone and tetramethyl-p-benzoquinone.</text>
</comment>
<comment type="catalytic activity">
    <reaction evidence="3">
        <text>methanophenazine + reduced coenzyme F420-(gamma-L-Glu)(n) = dihydromethanophenazine + oxidized coenzyme F420-(gamma-L-Glu)(n) + H(+)</text>
        <dbReference type="Rhea" id="RHEA:54752"/>
        <dbReference type="Rhea" id="RHEA-COMP:12939"/>
        <dbReference type="Rhea" id="RHEA-COMP:14378"/>
        <dbReference type="ChEBI" id="CHEBI:15378"/>
        <dbReference type="ChEBI" id="CHEBI:29118"/>
        <dbReference type="ChEBI" id="CHEBI:50375"/>
        <dbReference type="ChEBI" id="CHEBI:133980"/>
        <dbReference type="ChEBI" id="CHEBI:139511"/>
        <dbReference type="EC" id="1.5.98.3"/>
    </reaction>
</comment>
<comment type="cofactor">
    <cofactor evidence="4">
        <name>[2Fe-2S] cluster</name>
        <dbReference type="ChEBI" id="CHEBI:190135"/>
    </cofactor>
    <text evidence="4">Binds 1 [2Fe-2S] cluster.</text>
</comment>
<comment type="biophysicochemical properties">
    <kinetics>
        <KM evidence="3">7 uM for F(420)H(2) (at 37 degrees Celsius and pH 7)</KM>
        <Vmax evidence="3">17.0 umol/min/mg enzyme (at 37 degrees Celsius and pH 7)</Vmax>
        <text>Measured for the whole complex.</text>
    </kinetics>
    <phDependence>
        <text evidence="3">Optimum pH is 8.5.</text>
    </phDependence>
    <temperatureDependence>
        <text evidence="3">Optimum temperature is 39 degrees Celsius.</text>
    </temperatureDependence>
</comment>
<comment type="subunit">
    <text evidence="2">The FPO complex is composed of at least 13 different subunits.</text>
</comment>
<comment type="similarity">
    <text evidence="4">Belongs to the FpoO family.</text>
</comment>